<organism>
    <name type="scientific">Corynebacterium glutamicum (strain ATCC 13032 / DSM 20300 / JCM 1318 / BCRC 11384 / CCUG 27702 / LMG 3730 / NBRC 12168 / NCIMB 10025 / NRRL B-2784 / 534)</name>
    <dbReference type="NCBI Taxonomy" id="196627"/>
    <lineage>
        <taxon>Bacteria</taxon>
        <taxon>Bacillati</taxon>
        <taxon>Actinomycetota</taxon>
        <taxon>Actinomycetes</taxon>
        <taxon>Mycobacteriales</taxon>
        <taxon>Corynebacteriaceae</taxon>
        <taxon>Corynebacterium</taxon>
    </lineage>
</organism>
<evidence type="ECO:0000255" key="1">
    <source>
        <dbReference type="HAMAP-Rule" id="MF_00083"/>
    </source>
</evidence>
<evidence type="ECO:0000305" key="2"/>
<keyword id="KW-0963">Cytoplasm</keyword>
<keyword id="KW-0378">Hydrolase</keyword>
<keyword id="KW-1185">Reference proteome</keyword>
<keyword id="KW-0694">RNA-binding</keyword>
<keyword id="KW-0820">tRNA-binding</keyword>
<feature type="chain" id="PRO_0000187728" description="Peptidyl-tRNA hydrolase 2">
    <location>
        <begin position="1"/>
        <end position="204"/>
    </location>
</feature>
<feature type="active site" description="Proton acceptor" evidence="1">
    <location>
        <position position="42"/>
    </location>
</feature>
<feature type="binding site" evidence="1">
    <location>
        <position position="37"/>
    </location>
    <ligand>
        <name>tRNA</name>
        <dbReference type="ChEBI" id="CHEBI:17843"/>
    </ligand>
</feature>
<feature type="binding site" evidence="1">
    <location>
        <position position="86"/>
    </location>
    <ligand>
        <name>tRNA</name>
        <dbReference type="ChEBI" id="CHEBI:17843"/>
    </ligand>
</feature>
<feature type="binding site" evidence="1">
    <location>
        <position position="88"/>
    </location>
    <ligand>
        <name>tRNA</name>
        <dbReference type="ChEBI" id="CHEBI:17843"/>
    </ligand>
</feature>
<feature type="binding site" evidence="1">
    <location>
        <position position="134"/>
    </location>
    <ligand>
        <name>tRNA</name>
        <dbReference type="ChEBI" id="CHEBI:17843"/>
    </ligand>
</feature>
<feature type="site" description="Discriminates between blocked and unblocked aminoacyl-tRNA" evidence="1">
    <location>
        <position position="32"/>
    </location>
</feature>
<feature type="site" description="Stabilizes the basic form of H active site to accept a proton" evidence="1">
    <location>
        <position position="113"/>
    </location>
</feature>
<sequence length="204" mass="21695">MTSVSFLSKIQALFAPKPELPAAKWLVVGLGNPGAKYESTRHNVGYMCQDMLIDAHQQQPLTPATGYKALTTQLAPGVLAVRSTTFMNHSGQGVAPIAAALGIPAERIIVIHDELDLPAGKVRLKKGGNENGHNGLKSLTEELGTRDYLRVRIGISRPPAGMAVPDYVLEPVDHDQPGIELAAEAVDLLLAQGLSAAQNAIHSR</sequence>
<protein>
    <recommendedName>
        <fullName evidence="1">Peptidyl-tRNA hydrolase 2</fullName>
        <shortName evidence="1">Pth 2</shortName>
        <ecNumber evidence="1">3.1.1.29</ecNumber>
    </recommendedName>
</protein>
<name>PTH2_CORGL</name>
<proteinExistence type="inferred from homology"/>
<reference key="1">
    <citation type="journal article" date="2003" name="Appl. Microbiol. Biotechnol.">
        <title>The Corynebacterium glutamicum genome: features and impacts on biotechnological processes.</title>
        <authorList>
            <person name="Ikeda M."/>
            <person name="Nakagawa S."/>
        </authorList>
    </citation>
    <scope>NUCLEOTIDE SEQUENCE [LARGE SCALE GENOMIC DNA]</scope>
    <source>
        <strain>ATCC 13032 / DSM 20300 / JCM 1318 / BCRC 11384 / CCUG 27702 / LMG 3730 / NBRC 12168 / NCIMB 10025 / NRRL B-2784 / 534</strain>
    </source>
</reference>
<reference key="2">
    <citation type="journal article" date="2003" name="J. Biotechnol.">
        <title>The complete Corynebacterium glutamicum ATCC 13032 genome sequence and its impact on the production of L-aspartate-derived amino acids and vitamins.</title>
        <authorList>
            <person name="Kalinowski J."/>
            <person name="Bathe B."/>
            <person name="Bartels D."/>
            <person name="Bischoff N."/>
            <person name="Bott M."/>
            <person name="Burkovski A."/>
            <person name="Dusch N."/>
            <person name="Eggeling L."/>
            <person name="Eikmanns B.J."/>
            <person name="Gaigalat L."/>
            <person name="Goesmann A."/>
            <person name="Hartmann M."/>
            <person name="Huthmacher K."/>
            <person name="Kraemer R."/>
            <person name="Linke B."/>
            <person name="McHardy A.C."/>
            <person name="Meyer F."/>
            <person name="Moeckel B."/>
            <person name="Pfefferle W."/>
            <person name="Puehler A."/>
            <person name="Rey D.A."/>
            <person name="Rueckert C."/>
            <person name="Rupp O."/>
            <person name="Sahm H."/>
            <person name="Wendisch V.F."/>
            <person name="Wiegraebe I."/>
            <person name="Tauch A."/>
        </authorList>
    </citation>
    <scope>NUCLEOTIDE SEQUENCE [LARGE SCALE GENOMIC DNA]</scope>
    <source>
        <strain>ATCC 13032 / DSM 20300 / JCM 1318 / BCRC 11384 / CCUG 27702 / LMG 3730 / NBRC 12168 / NCIMB 10025 / NRRL B-2784 / 534</strain>
    </source>
</reference>
<gene>
    <name evidence="1" type="primary">pth1</name>
    <name type="ordered locus">Cgl0935</name>
    <name type="ordered locus">cg1067</name>
</gene>
<comment type="function">
    <text evidence="1">Hydrolyzes ribosome-free peptidyl-tRNAs (with 1 or more amino acids incorporated), which drop off the ribosome during protein synthesis, or as a result of ribosome stalling.</text>
</comment>
<comment type="function">
    <text evidence="1">Catalyzes the release of premature peptidyl moieties from peptidyl-tRNA molecules trapped in stalled 50S ribosomal subunits, and thus maintains levels of free tRNAs and 50S ribosomes.</text>
</comment>
<comment type="catalytic activity">
    <reaction evidence="1">
        <text>an N-acyl-L-alpha-aminoacyl-tRNA + H2O = an N-acyl-L-amino acid + a tRNA + H(+)</text>
        <dbReference type="Rhea" id="RHEA:54448"/>
        <dbReference type="Rhea" id="RHEA-COMP:10123"/>
        <dbReference type="Rhea" id="RHEA-COMP:13883"/>
        <dbReference type="ChEBI" id="CHEBI:15377"/>
        <dbReference type="ChEBI" id="CHEBI:15378"/>
        <dbReference type="ChEBI" id="CHEBI:59874"/>
        <dbReference type="ChEBI" id="CHEBI:78442"/>
        <dbReference type="ChEBI" id="CHEBI:138191"/>
        <dbReference type="EC" id="3.1.1.29"/>
    </reaction>
</comment>
<comment type="subunit">
    <text evidence="1">Monomer.</text>
</comment>
<comment type="subcellular location">
    <subcellularLocation>
        <location evidence="1">Cytoplasm</location>
    </subcellularLocation>
</comment>
<comment type="similarity">
    <text evidence="1">Belongs to the PTH family.</text>
</comment>
<comment type="sequence caution" evidence="2">
    <conflict type="erroneous initiation">
        <sequence resource="EMBL-CDS" id="CAF19641"/>
    </conflict>
    <text>Truncated N-terminus.</text>
</comment>
<dbReference type="EC" id="3.1.1.29" evidence="1"/>
<dbReference type="EMBL" id="BA000036">
    <property type="protein sequence ID" value="BAB98328.1"/>
    <property type="molecule type" value="Genomic_DNA"/>
</dbReference>
<dbReference type="EMBL" id="BX927150">
    <property type="protein sequence ID" value="CAF19641.1"/>
    <property type="status" value="ALT_INIT"/>
    <property type="molecule type" value="Genomic_DNA"/>
</dbReference>
<dbReference type="RefSeq" id="NP_600163.1">
    <property type="nucleotide sequence ID" value="NC_003450.3"/>
</dbReference>
<dbReference type="SMR" id="Q8NRV6"/>
<dbReference type="STRING" id="196627.cg1067"/>
<dbReference type="KEGG" id="cgb:cg1067"/>
<dbReference type="KEGG" id="cgl:Cgl0935"/>
<dbReference type="PATRIC" id="fig|196627.13.peg.921"/>
<dbReference type="eggNOG" id="COG0193">
    <property type="taxonomic scope" value="Bacteria"/>
</dbReference>
<dbReference type="HOGENOM" id="CLU_062456_4_0_11"/>
<dbReference type="OrthoDB" id="9800507at2"/>
<dbReference type="BioCyc" id="CORYNE:G18NG-10505-MONOMER"/>
<dbReference type="Proteomes" id="UP000000582">
    <property type="component" value="Chromosome"/>
</dbReference>
<dbReference type="Proteomes" id="UP000001009">
    <property type="component" value="Chromosome"/>
</dbReference>
<dbReference type="GO" id="GO:0005737">
    <property type="term" value="C:cytoplasm"/>
    <property type="evidence" value="ECO:0007669"/>
    <property type="project" value="UniProtKB-SubCell"/>
</dbReference>
<dbReference type="GO" id="GO:0004045">
    <property type="term" value="F:peptidyl-tRNA hydrolase activity"/>
    <property type="evidence" value="ECO:0007669"/>
    <property type="project" value="UniProtKB-UniRule"/>
</dbReference>
<dbReference type="GO" id="GO:0000049">
    <property type="term" value="F:tRNA binding"/>
    <property type="evidence" value="ECO:0007669"/>
    <property type="project" value="UniProtKB-UniRule"/>
</dbReference>
<dbReference type="GO" id="GO:0006515">
    <property type="term" value="P:protein quality control for misfolded or incompletely synthesized proteins"/>
    <property type="evidence" value="ECO:0007669"/>
    <property type="project" value="UniProtKB-UniRule"/>
</dbReference>
<dbReference type="GO" id="GO:0072344">
    <property type="term" value="P:rescue of stalled ribosome"/>
    <property type="evidence" value="ECO:0007669"/>
    <property type="project" value="UniProtKB-UniRule"/>
</dbReference>
<dbReference type="CDD" id="cd00462">
    <property type="entry name" value="PTH"/>
    <property type="match status" value="1"/>
</dbReference>
<dbReference type="Gene3D" id="3.40.50.1470">
    <property type="entry name" value="Peptidyl-tRNA hydrolase"/>
    <property type="match status" value="1"/>
</dbReference>
<dbReference type="HAMAP" id="MF_00083">
    <property type="entry name" value="Pept_tRNA_hydro_bact"/>
    <property type="match status" value="1"/>
</dbReference>
<dbReference type="InterPro" id="IPR001328">
    <property type="entry name" value="Pept_tRNA_hydro"/>
</dbReference>
<dbReference type="InterPro" id="IPR036416">
    <property type="entry name" value="Pept_tRNA_hydro_sf"/>
</dbReference>
<dbReference type="NCBIfam" id="TIGR00447">
    <property type="entry name" value="pth"/>
    <property type="match status" value="1"/>
</dbReference>
<dbReference type="PANTHER" id="PTHR17224">
    <property type="entry name" value="PEPTIDYL-TRNA HYDROLASE"/>
    <property type="match status" value="1"/>
</dbReference>
<dbReference type="PANTHER" id="PTHR17224:SF1">
    <property type="entry name" value="PEPTIDYL-TRNA HYDROLASE"/>
    <property type="match status" value="1"/>
</dbReference>
<dbReference type="Pfam" id="PF01195">
    <property type="entry name" value="Pept_tRNA_hydro"/>
    <property type="match status" value="1"/>
</dbReference>
<dbReference type="SUPFAM" id="SSF53178">
    <property type="entry name" value="Peptidyl-tRNA hydrolase-like"/>
    <property type="match status" value="1"/>
</dbReference>
<accession>Q8NRV6</accession>